<feature type="chain" id="PRO_1000017711" description="Adenosine deaminase">
    <location>
        <begin position="1"/>
        <end position="336"/>
    </location>
</feature>
<feature type="active site" description="Proton donor" evidence="1">
    <location>
        <position position="202"/>
    </location>
</feature>
<feature type="binding site" evidence="1">
    <location>
        <position position="15"/>
    </location>
    <ligand>
        <name>Zn(2+)</name>
        <dbReference type="ChEBI" id="CHEBI:29105"/>
        <note>catalytic</note>
    </ligand>
</feature>
<feature type="binding site" evidence="1">
    <location>
        <position position="17"/>
    </location>
    <ligand>
        <name>substrate</name>
    </ligand>
</feature>
<feature type="binding site" evidence="1">
    <location>
        <position position="17"/>
    </location>
    <ligand>
        <name>Zn(2+)</name>
        <dbReference type="ChEBI" id="CHEBI:29105"/>
        <note>catalytic</note>
    </ligand>
</feature>
<feature type="binding site" evidence="1">
    <location>
        <position position="19"/>
    </location>
    <ligand>
        <name>substrate</name>
    </ligand>
</feature>
<feature type="binding site" evidence="1">
    <location>
        <position position="172"/>
    </location>
    <ligand>
        <name>substrate</name>
    </ligand>
</feature>
<feature type="binding site" evidence="1">
    <location>
        <position position="199"/>
    </location>
    <ligand>
        <name>Zn(2+)</name>
        <dbReference type="ChEBI" id="CHEBI:29105"/>
        <note>catalytic</note>
    </ligand>
</feature>
<feature type="binding site" evidence="1">
    <location>
        <position position="279"/>
    </location>
    <ligand>
        <name>Zn(2+)</name>
        <dbReference type="ChEBI" id="CHEBI:29105"/>
        <note>catalytic</note>
    </ligand>
</feature>
<feature type="site" description="Important for catalytic activity" evidence="1">
    <location>
        <position position="222"/>
    </location>
</feature>
<accession>Q5M4W6</accession>
<organism>
    <name type="scientific">Streptococcus thermophilus (strain ATCC BAA-250 / LMG 18311)</name>
    <dbReference type="NCBI Taxonomy" id="264199"/>
    <lineage>
        <taxon>Bacteria</taxon>
        <taxon>Bacillati</taxon>
        <taxon>Bacillota</taxon>
        <taxon>Bacilli</taxon>
        <taxon>Lactobacillales</taxon>
        <taxon>Streptococcaceae</taxon>
        <taxon>Streptococcus</taxon>
    </lineage>
</organism>
<comment type="function">
    <text evidence="1">Catalyzes the hydrolytic deamination of adenosine and 2-deoxyadenosine.</text>
</comment>
<comment type="catalytic activity">
    <reaction evidence="1">
        <text>adenosine + H2O + H(+) = inosine + NH4(+)</text>
        <dbReference type="Rhea" id="RHEA:24408"/>
        <dbReference type="ChEBI" id="CHEBI:15377"/>
        <dbReference type="ChEBI" id="CHEBI:15378"/>
        <dbReference type="ChEBI" id="CHEBI:16335"/>
        <dbReference type="ChEBI" id="CHEBI:17596"/>
        <dbReference type="ChEBI" id="CHEBI:28938"/>
        <dbReference type="EC" id="3.5.4.4"/>
    </reaction>
    <physiologicalReaction direction="left-to-right" evidence="1">
        <dbReference type="Rhea" id="RHEA:24409"/>
    </physiologicalReaction>
</comment>
<comment type="catalytic activity">
    <reaction evidence="1">
        <text>2'-deoxyadenosine + H2O + H(+) = 2'-deoxyinosine + NH4(+)</text>
        <dbReference type="Rhea" id="RHEA:28190"/>
        <dbReference type="ChEBI" id="CHEBI:15377"/>
        <dbReference type="ChEBI" id="CHEBI:15378"/>
        <dbReference type="ChEBI" id="CHEBI:17256"/>
        <dbReference type="ChEBI" id="CHEBI:28938"/>
        <dbReference type="ChEBI" id="CHEBI:28997"/>
        <dbReference type="EC" id="3.5.4.4"/>
    </reaction>
    <physiologicalReaction direction="left-to-right" evidence="1">
        <dbReference type="Rhea" id="RHEA:28191"/>
    </physiologicalReaction>
</comment>
<comment type="cofactor">
    <cofactor evidence="1">
        <name>Zn(2+)</name>
        <dbReference type="ChEBI" id="CHEBI:29105"/>
    </cofactor>
    <text evidence="1">Binds 1 zinc ion per subunit.</text>
</comment>
<comment type="similarity">
    <text evidence="1">Belongs to the metallo-dependent hydrolases superfamily. Adenosine and AMP deaminases family. Adenosine deaminase subfamily.</text>
</comment>
<keyword id="KW-0378">Hydrolase</keyword>
<keyword id="KW-0479">Metal-binding</keyword>
<keyword id="KW-0546">Nucleotide metabolism</keyword>
<keyword id="KW-1185">Reference proteome</keyword>
<keyword id="KW-0862">Zinc</keyword>
<evidence type="ECO:0000255" key="1">
    <source>
        <dbReference type="HAMAP-Rule" id="MF_00540"/>
    </source>
</evidence>
<protein>
    <recommendedName>
        <fullName evidence="1">Adenosine deaminase</fullName>
        <ecNumber evidence="1">3.5.4.4</ecNumber>
    </recommendedName>
    <alternativeName>
        <fullName evidence="1">Adenosine aminohydrolase</fullName>
    </alternativeName>
</protein>
<sequence length="336" mass="37271">MTAIDFHKLAKIELHCHLDGSLSLSTIRHLAELAQIDLPEDDEELKQHVTAPVTCESLLEYLESFDYIRPLLQTNEALTIAAYDVAKQAALENVIYIEVRFAPELSMDKGLTVTETIDAVCQGLRQAQEEFGIIAKALVCGMRQSDQSLTARILDEANQVRDSDFVGFDFAGDELNYGPAAIKPLIEQVKSYNRPMTFHAGECGCPAFLAESIAMGIKRNGHATILAQEPELLDEFVKNGVTGELCLTSNLQTKAAVTVNDFPYLKMKAAGANITINTDNRTVSDTNLTKEYELYHKYFDSTVQDFYAHNKTAIEASFASDEEKEELLARLAKAYS</sequence>
<name>ADD_STRT2</name>
<dbReference type="EC" id="3.5.4.4" evidence="1"/>
<dbReference type="EMBL" id="CP000023">
    <property type="protein sequence ID" value="AAV60441.1"/>
    <property type="molecule type" value="Genomic_DNA"/>
</dbReference>
<dbReference type="RefSeq" id="WP_011225786.1">
    <property type="nucleotide sequence ID" value="NC_006448.1"/>
</dbReference>
<dbReference type="SMR" id="Q5M4W6"/>
<dbReference type="STRING" id="264199.stu0750"/>
<dbReference type="GeneID" id="66898648"/>
<dbReference type="KEGG" id="stl:stu0750"/>
<dbReference type="eggNOG" id="COG1816">
    <property type="taxonomic scope" value="Bacteria"/>
</dbReference>
<dbReference type="HOGENOM" id="CLU_039228_0_0_9"/>
<dbReference type="Proteomes" id="UP000001170">
    <property type="component" value="Chromosome"/>
</dbReference>
<dbReference type="GO" id="GO:0005829">
    <property type="term" value="C:cytosol"/>
    <property type="evidence" value="ECO:0007669"/>
    <property type="project" value="TreeGrafter"/>
</dbReference>
<dbReference type="GO" id="GO:0046936">
    <property type="term" value="F:2'-deoxyadenosine deaminase activity"/>
    <property type="evidence" value="ECO:0007669"/>
    <property type="project" value="RHEA"/>
</dbReference>
<dbReference type="GO" id="GO:0004000">
    <property type="term" value="F:adenosine deaminase activity"/>
    <property type="evidence" value="ECO:0007669"/>
    <property type="project" value="UniProtKB-UniRule"/>
</dbReference>
<dbReference type="GO" id="GO:0008270">
    <property type="term" value="F:zinc ion binding"/>
    <property type="evidence" value="ECO:0007669"/>
    <property type="project" value="UniProtKB-UniRule"/>
</dbReference>
<dbReference type="GO" id="GO:0006154">
    <property type="term" value="P:adenosine catabolic process"/>
    <property type="evidence" value="ECO:0007669"/>
    <property type="project" value="TreeGrafter"/>
</dbReference>
<dbReference type="GO" id="GO:0043103">
    <property type="term" value="P:hypoxanthine salvage"/>
    <property type="evidence" value="ECO:0007669"/>
    <property type="project" value="TreeGrafter"/>
</dbReference>
<dbReference type="GO" id="GO:0046103">
    <property type="term" value="P:inosine biosynthetic process"/>
    <property type="evidence" value="ECO:0007669"/>
    <property type="project" value="TreeGrafter"/>
</dbReference>
<dbReference type="GO" id="GO:0009117">
    <property type="term" value="P:nucleotide metabolic process"/>
    <property type="evidence" value="ECO:0007669"/>
    <property type="project" value="UniProtKB-KW"/>
</dbReference>
<dbReference type="GO" id="GO:0009168">
    <property type="term" value="P:purine ribonucleoside monophosphate biosynthetic process"/>
    <property type="evidence" value="ECO:0007669"/>
    <property type="project" value="UniProtKB-UniRule"/>
</dbReference>
<dbReference type="Gene3D" id="3.20.20.140">
    <property type="entry name" value="Metal-dependent hydrolases"/>
    <property type="match status" value="1"/>
</dbReference>
<dbReference type="HAMAP" id="MF_00540">
    <property type="entry name" value="A_deaminase"/>
    <property type="match status" value="1"/>
</dbReference>
<dbReference type="InterPro" id="IPR028893">
    <property type="entry name" value="A_deaminase"/>
</dbReference>
<dbReference type="InterPro" id="IPR001365">
    <property type="entry name" value="A_deaminase_dom"/>
</dbReference>
<dbReference type="InterPro" id="IPR006330">
    <property type="entry name" value="Ado/ade_deaminase"/>
</dbReference>
<dbReference type="InterPro" id="IPR032466">
    <property type="entry name" value="Metal_Hydrolase"/>
</dbReference>
<dbReference type="NCBIfam" id="TIGR01430">
    <property type="entry name" value="aden_deam"/>
    <property type="match status" value="1"/>
</dbReference>
<dbReference type="PANTHER" id="PTHR11409">
    <property type="entry name" value="ADENOSINE DEAMINASE"/>
    <property type="match status" value="1"/>
</dbReference>
<dbReference type="PANTHER" id="PTHR11409:SF43">
    <property type="entry name" value="ADENOSINE DEAMINASE"/>
    <property type="match status" value="1"/>
</dbReference>
<dbReference type="Pfam" id="PF00962">
    <property type="entry name" value="A_deaminase"/>
    <property type="match status" value="1"/>
</dbReference>
<dbReference type="SUPFAM" id="SSF51556">
    <property type="entry name" value="Metallo-dependent hydrolases"/>
    <property type="match status" value="1"/>
</dbReference>
<reference key="1">
    <citation type="journal article" date="2004" name="Nat. Biotechnol.">
        <title>Complete sequence and comparative genome analysis of the dairy bacterium Streptococcus thermophilus.</title>
        <authorList>
            <person name="Bolotin A."/>
            <person name="Quinquis B."/>
            <person name="Renault P."/>
            <person name="Sorokin A."/>
            <person name="Ehrlich S.D."/>
            <person name="Kulakauskas S."/>
            <person name="Lapidus A."/>
            <person name="Goltsman E."/>
            <person name="Mazur M."/>
            <person name="Pusch G.D."/>
            <person name="Fonstein M."/>
            <person name="Overbeek R."/>
            <person name="Kyprides N."/>
            <person name="Purnelle B."/>
            <person name="Prozzi D."/>
            <person name="Ngui K."/>
            <person name="Masuy D."/>
            <person name="Hancy F."/>
            <person name="Burteau S."/>
            <person name="Boutry M."/>
            <person name="Delcour J."/>
            <person name="Goffeau A."/>
            <person name="Hols P."/>
        </authorList>
    </citation>
    <scope>NUCLEOTIDE SEQUENCE [LARGE SCALE GENOMIC DNA]</scope>
    <source>
        <strain>ATCC BAA-250 / LMG 18311</strain>
    </source>
</reference>
<proteinExistence type="inferred from homology"/>
<gene>
    <name evidence="1" type="primary">add</name>
    <name type="ordered locus">stu0750</name>
</gene>